<dbReference type="EMBL" id="AE009441">
    <property type="protein sequence ID" value="AAL64669.1"/>
    <property type="molecule type" value="Genomic_DNA"/>
</dbReference>
<dbReference type="RefSeq" id="WP_011009137.1">
    <property type="nucleotide sequence ID" value="NC_003364.1"/>
</dbReference>
<dbReference type="SMR" id="Q8ZTU0"/>
<dbReference type="STRING" id="178306.PAE3098"/>
<dbReference type="EnsemblBacteria" id="AAL64669">
    <property type="protein sequence ID" value="AAL64669"/>
    <property type="gene ID" value="PAE3098"/>
</dbReference>
<dbReference type="GeneID" id="1463845"/>
<dbReference type="KEGG" id="pai:PAE3098"/>
<dbReference type="PATRIC" id="fig|178306.9.peg.2328"/>
<dbReference type="eggNOG" id="arCOG04175">
    <property type="taxonomic scope" value="Archaea"/>
</dbReference>
<dbReference type="HOGENOM" id="CLU_177460_0_1_2"/>
<dbReference type="InParanoid" id="Q8ZTU0"/>
<dbReference type="Proteomes" id="UP000002439">
    <property type="component" value="Chromosome"/>
</dbReference>
<dbReference type="GO" id="GO:1990904">
    <property type="term" value="C:ribonucleoprotein complex"/>
    <property type="evidence" value="ECO:0007669"/>
    <property type="project" value="UniProtKB-KW"/>
</dbReference>
<dbReference type="GO" id="GO:0005840">
    <property type="term" value="C:ribosome"/>
    <property type="evidence" value="ECO:0007669"/>
    <property type="project" value="UniProtKB-KW"/>
</dbReference>
<dbReference type="GO" id="GO:0070180">
    <property type="term" value="F:large ribosomal subunit rRNA binding"/>
    <property type="evidence" value="ECO:0007669"/>
    <property type="project" value="UniProtKB-UniRule"/>
</dbReference>
<dbReference type="GO" id="GO:0003735">
    <property type="term" value="F:structural constituent of ribosome"/>
    <property type="evidence" value="ECO:0007669"/>
    <property type="project" value="InterPro"/>
</dbReference>
<dbReference type="GO" id="GO:0006412">
    <property type="term" value="P:translation"/>
    <property type="evidence" value="ECO:0007669"/>
    <property type="project" value="UniProtKB-UniRule"/>
</dbReference>
<dbReference type="Gene3D" id="3.10.20.10">
    <property type="match status" value="1"/>
</dbReference>
<dbReference type="HAMAP" id="MF_00273">
    <property type="entry name" value="Ribosomal_eL20"/>
    <property type="match status" value="1"/>
</dbReference>
<dbReference type="InterPro" id="IPR028877">
    <property type="entry name" value="Ribosomal_eL20"/>
</dbReference>
<dbReference type="InterPro" id="IPR023573">
    <property type="entry name" value="Ribosomal_eL20_dom"/>
</dbReference>
<dbReference type="NCBIfam" id="NF001981">
    <property type="entry name" value="PRK00773.1-1"/>
    <property type="match status" value="1"/>
</dbReference>
<dbReference type="Pfam" id="PF01775">
    <property type="entry name" value="Ribosomal_L18A"/>
    <property type="match status" value="1"/>
</dbReference>
<dbReference type="SUPFAM" id="SSF160374">
    <property type="entry name" value="RplX-like"/>
    <property type="match status" value="1"/>
</dbReference>
<sequence length="78" mass="8885">MPRIYKVIGETTTGMKFKLEVLGEKPYDAIEKAYSLIGSRHKLSRTQIRIKDVVVISPEDASSEEVKLLMSIDKVIKY</sequence>
<gene>
    <name evidence="1" type="primary">rpl18a</name>
    <name evidence="1" type="synonym">rpl20e</name>
    <name evidence="1" type="synonym">rplX</name>
    <name type="ordered locus">PAE3098</name>
</gene>
<keyword id="KW-1185">Reference proteome</keyword>
<keyword id="KW-0687">Ribonucleoprotein</keyword>
<keyword id="KW-0689">Ribosomal protein</keyword>
<keyword id="KW-0694">RNA-binding</keyword>
<keyword id="KW-0699">rRNA-binding</keyword>
<organism>
    <name type="scientific">Pyrobaculum aerophilum (strain ATCC 51768 / DSM 7523 / JCM 9630 / CIP 104966 / NBRC 100827 / IM2)</name>
    <dbReference type="NCBI Taxonomy" id="178306"/>
    <lineage>
        <taxon>Archaea</taxon>
        <taxon>Thermoproteota</taxon>
        <taxon>Thermoprotei</taxon>
        <taxon>Thermoproteales</taxon>
        <taxon>Thermoproteaceae</taxon>
        <taxon>Pyrobaculum</taxon>
    </lineage>
</organism>
<evidence type="ECO:0000255" key="1">
    <source>
        <dbReference type="HAMAP-Rule" id="MF_00273"/>
    </source>
</evidence>
<evidence type="ECO:0000305" key="2"/>
<feature type="chain" id="PRO_0000153705" description="Large ribosomal subunit protein eL20">
    <location>
        <begin position="1"/>
        <end position="78"/>
    </location>
</feature>
<reference key="1">
    <citation type="journal article" date="2002" name="Proc. Natl. Acad. Sci. U.S.A.">
        <title>Genome sequence of the hyperthermophilic crenarchaeon Pyrobaculum aerophilum.</title>
        <authorList>
            <person name="Fitz-Gibbon S.T."/>
            <person name="Ladner H."/>
            <person name="Kim U.-J."/>
            <person name="Stetter K.O."/>
            <person name="Simon M.I."/>
            <person name="Miller J.H."/>
        </authorList>
    </citation>
    <scope>NUCLEOTIDE SEQUENCE [LARGE SCALE GENOMIC DNA]</scope>
    <source>
        <strain>ATCC 51768 / DSM 7523 / JCM 9630 / CIP 104966 / NBRC 100827 / IM2</strain>
    </source>
</reference>
<proteinExistence type="inferred from homology"/>
<protein>
    <recommendedName>
        <fullName evidence="1">Large ribosomal subunit protein eL20</fullName>
    </recommendedName>
    <alternativeName>
        <fullName evidence="2">50S ribosomal protein L18Ae</fullName>
    </alternativeName>
    <alternativeName>
        <fullName evidence="1">50S ribosomal protein L20e</fullName>
    </alternativeName>
    <alternativeName>
        <fullName evidence="1">50S ribosomal protein LX</fullName>
    </alternativeName>
</protein>
<comment type="subunit">
    <text evidence="1">Part of the 50S ribosomal subunit. Binds 23S rRNA.</text>
</comment>
<comment type="similarity">
    <text evidence="1">Belongs to the eukaryotic ribosomal protein eL20 family.</text>
</comment>
<accession>Q8ZTU0</accession>
<name>RL18A_PYRAE</name>